<keyword id="KW-0963">Cytoplasm</keyword>
<keyword id="KW-0413">Isomerase</keyword>
<keyword id="KW-0627">Porphyrin biosynthesis</keyword>
<keyword id="KW-0663">Pyridoxal phosphate</keyword>
<gene>
    <name evidence="1" type="primary">hemL2</name>
    <name type="ordered locus">BCG9842_B4790</name>
</gene>
<comment type="catalytic activity">
    <reaction evidence="1">
        <text>(S)-4-amino-5-oxopentanoate = 5-aminolevulinate</text>
        <dbReference type="Rhea" id="RHEA:14265"/>
        <dbReference type="ChEBI" id="CHEBI:57501"/>
        <dbReference type="ChEBI" id="CHEBI:356416"/>
        <dbReference type="EC" id="5.4.3.8"/>
    </reaction>
</comment>
<comment type="cofactor">
    <cofactor evidence="1">
        <name>pyridoxal 5'-phosphate</name>
        <dbReference type="ChEBI" id="CHEBI:597326"/>
    </cofactor>
</comment>
<comment type="pathway">
    <text evidence="1">Porphyrin-containing compound metabolism; protoporphyrin-IX biosynthesis; 5-aminolevulinate from L-glutamyl-tRNA(Glu): step 2/2.</text>
</comment>
<comment type="subunit">
    <text evidence="1">Homodimer.</text>
</comment>
<comment type="subcellular location">
    <subcellularLocation>
        <location evidence="1">Cytoplasm</location>
    </subcellularLocation>
</comment>
<comment type="similarity">
    <text evidence="1">Belongs to the class-III pyridoxal-phosphate-dependent aminotransferase family. HemL subfamily.</text>
</comment>
<reference key="1">
    <citation type="submission" date="2008-10" db="EMBL/GenBank/DDBJ databases">
        <title>Genome sequence of Bacillus cereus G9842.</title>
        <authorList>
            <person name="Dodson R.J."/>
            <person name="Durkin A.S."/>
            <person name="Rosovitz M.J."/>
            <person name="Rasko D.A."/>
            <person name="Hoffmaster A."/>
            <person name="Ravel J."/>
            <person name="Sutton G."/>
        </authorList>
    </citation>
    <scope>NUCLEOTIDE SEQUENCE [LARGE SCALE GENOMIC DNA]</scope>
    <source>
        <strain>G9842</strain>
    </source>
</reference>
<accession>B7IW22</accession>
<evidence type="ECO:0000255" key="1">
    <source>
        <dbReference type="HAMAP-Rule" id="MF_00375"/>
    </source>
</evidence>
<name>GSA2_BACC2</name>
<sequence>MVVKFTKSEALHKEALEHIVGGVNSPSRSFKAVGGGAPVAMERGKGAYFWDVDGNKYIDYLAAYGPIITGHAHPHITKAITTAAENGVLYGTPTALEVKFAKMLKEAMPALDKVRFVNSGTEAVMTTIRVARAYTGRTKIMKFAGCYHGHSDLVLVAAGSGPSTLGTPDSAGVPQSIAQEVITVPFNNVETLKEALDKWGHEVAAILVEPIVGNFGIVEPKPGFLEKVNELVHEAGALVIYDEVITAFRFMYGGAQDLLGVTPDLTALGKVIGGGLPIGAYGGKKEIMEQVAPLGPAYQAGTMAGNPASMASGIACLEVLQQEGLYEKLDELGAMLEKGILEQAAKHNIDITLNRLKGALTVYFTTNTIEDYDAAQDTDGEMFGKFFKLMLQEGVNLAPSKYEAWFLTTEHTKEDIEYTIEAVGRAFAALADSK</sequence>
<protein>
    <recommendedName>
        <fullName evidence="1">Glutamate-1-semialdehyde 2,1-aminomutase 2</fullName>
        <shortName evidence="1">GSA 2</shortName>
        <ecNumber evidence="1">5.4.3.8</ecNumber>
    </recommendedName>
    <alternativeName>
        <fullName evidence="1">Glutamate-1-semialdehyde aminotransferase 2</fullName>
        <shortName evidence="1">GSA-AT 2</shortName>
    </alternativeName>
</protein>
<proteinExistence type="inferred from homology"/>
<dbReference type="EC" id="5.4.3.8" evidence="1"/>
<dbReference type="EMBL" id="CP001186">
    <property type="protein sequence ID" value="ACK96685.1"/>
    <property type="molecule type" value="Genomic_DNA"/>
</dbReference>
<dbReference type="SMR" id="B7IW22"/>
<dbReference type="KEGG" id="bcg:BCG9842_B4790"/>
<dbReference type="HOGENOM" id="CLU_016922_1_5_9"/>
<dbReference type="UniPathway" id="UPA00251">
    <property type="reaction ID" value="UER00317"/>
</dbReference>
<dbReference type="Proteomes" id="UP000006744">
    <property type="component" value="Chromosome"/>
</dbReference>
<dbReference type="GO" id="GO:0005737">
    <property type="term" value="C:cytoplasm"/>
    <property type="evidence" value="ECO:0007669"/>
    <property type="project" value="UniProtKB-SubCell"/>
</dbReference>
<dbReference type="GO" id="GO:0042286">
    <property type="term" value="F:glutamate-1-semialdehyde 2,1-aminomutase activity"/>
    <property type="evidence" value="ECO:0007669"/>
    <property type="project" value="UniProtKB-UniRule"/>
</dbReference>
<dbReference type="GO" id="GO:0030170">
    <property type="term" value="F:pyridoxal phosphate binding"/>
    <property type="evidence" value="ECO:0007669"/>
    <property type="project" value="InterPro"/>
</dbReference>
<dbReference type="GO" id="GO:0008483">
    <property type="term" value="F:transaminase activity"/>
    <property type="evidence" value="ECO:0007669"/>
    <property type="project" value="InterPro"/>
</dbReference>
<dbReference type="GO" id="GO:0006782">
    <property type="term" value="P:protoporphyrinogen IX biosynthetic process"/>
    <property type="evidence" value="ECO:0007669"/>
    <property type="project" value="UniProtKB-UniRule"/>
</dbReference>
<dbReference type="CDD" id="cd00610">
    <property type="entry name" value="OAT_like"/>
    <property type="match status" value="1"/>
</dbReference>
<dbReference type="FunFam" id="3.40.640.10:FF:000021">
    <property type="entry name" value="Glutamate-1-semialdehyde 2,1-aminomutase"/>
    <property type="match status" value="1"/>
</dbReference>
<dbReference type="Gene3D" id="3.90.1150.10">
    <property type="entry name" value="Aspartate Aminotransferase, domain 1"/>
    <property type="match status" value="1"/>
</dbReference>
<dbReference type="Gene3D" id="3.40.640.10">
    <property type="entry name" value="Type I PLP-dependent aspartate aminotransferase-like (Major domain)"/>
    <property type="match status" value="1"/>
</dbReference>
<dbReference type="HAMAP" id="MF_00375">
    <property type="entry name" value="HemL_aminotrans_3"/>
    <property type="match status" value="1"/>
</dbReference>
<dbReference type="InterPro" id="IPR004639">
    <property type="entry name" value="4pyrrol_synth_GluAld_NH2Trfase"/>
</dbReference>
<dbReference type="InterPro" id="IPR005814">
    <property type="entry name" value="Aminotrans_3"/>
</dbReference>
<dbReference type="InterPro" id="IPR049704">
    <property type="entry name" value="Aminotrans_3_PPA_site"/>
</dbReference>
<dbReference type="InterPro" id="IPR015424">
    <property type="entry name" value="PyrdxlP-dep_Trfase"/>
</dbReference>
<dbReference type="InterPro" id="IPR015421">
    <property type="entry name" value="PyrdxlP-dep_Trfase_major"/>
</dbReference>
<dbReference type="InterPro" id="IPR015422">
    <property type="entry name" value="PyrdxlP-dep_Trfase_small"/>
</dbReference>
<dbReference type="NCBIfam" id="TIGR00713">
    <property type="entry name" value="hemL"/>
    <property type="match status" value="1"/>
</dbReference>
<dbReference type="NCBIfam" id="NF000818">
    <property type="entry name" value="PRK00062.1"/>
    <property type="match status" value="1"/>
</dbReference>
<dbReference type="NCBIfam" id="NF009055">
    <property type="entry name" value="PRK12389.1"/>
    <property type="match status" value="1"/>
</dbReference>
<dbReference type="PANTHER" id="PTHR43713">
    <property type="entry name" value="GLUTAMATE-1-SEMIALDEHYDE 2,1-AMINOMUTASE"/>
    <property type="match status" value="1"/>
</dbReference>
<dbReference type="PANTHER" id="PTHR43713:SF1">
    <property type="entry name" value="GLUTAMATE-1-SEMIALDEHYDE 2,1-AMINOMUTASE 2"/>
    <property type="match status" value="1"/>
</dbReference>
<dbReference type="Pfam" id="PF00202">
    <property type="entry name" value="Aminotran_3"/>
    <property type="match status" value="1"/>
</dbReference>
<dbReference type="SUPFAM" id="SSF53383">
    <property type="entry name" value="PLP-dependent transferases"/>
    <property type="match status" value="1"/>
</dbReference>
<dbReference type="PROSITE" id="PS00600">
    <property type="entry name" value="AA_TRANSFER_CLASS_3"/>
    <property type="match status" value="1"/>
</dbReference>
<organism>
    <name type="scientific">Bacillus cereus (strain G9842)</name>
    <dbReference type="NCBI Taxonomy" id="405531"/>
    <lineage>
        <taxon>Bacteria</taxon>
        <taxon>Bacillati</taxon>
        <taxon>Bacillota</taxon>
        <taxon>Bacilli</taxon>
        <taxon>Bacillales</taxon>
        <taxon>Bacillaceae</taxon>
        <taxon>Bacillus</taxon>
        <taxon>Bacillus cereus group</taxon>
    </lineage>
</organism>
<feature type="chain" id="PRO_0000382272" description="Glutamate-1-semialdehyde 2,1-aminomutase 2">
    <location>
        <begin position="1"/>
        <end position="434"/>
    </location>
</feature>
<feature type="modified residue" description="N6-(pyridoxal phosphate)lysine" evidence="1">
    <location>
        <position position="270"/>
    </location>
</feature>